<accession>B5XM83</accession>
<comment type="function">
    <text evidence="1">Bidirectionally degrades single-stranded DNA into large acid-insoluble oligonucleotides, which are then degraded further into small acid-soluble oligonucleotides.</text>
</comment>
<comment type="catalytic activity">
    <reaction evidence="1">
        <text>Exonucleolytic cleavage in either 5'- to 3'- or 3'- to 5'-direction to yield nucleoside 5'-phosphates.</text>
        <dbReference type="EC" id="3.1.11.6"/>
    </reaction>
</comment>
<comment type="subunit">
    <text evidence="1">Heterooligomer composed of large and small subunits.</text>
</comment>
<comment type="subcellular location">
    <subcellularLocation>
        <location evidence="1">Cytoplasm</location>
    </subcellularLocation>
</comment>
<comment type="similarity">
    <text evidence="1">Belongs to the XseA family.</text>
</comment>
<evidence type="ECO:0000255" key="1">
    <source>
        <dbReference type="HAMAP-Rule" id="MF_00378"/>
    </source>
</evidence>
<proteinExistence type="inferred from homology"/>
<keyword id="KW-0963">Cytoplasm</keyword>
<keyword id="KW-0269">Exonuclease</keyword>
<keyword id="KW-0378">Hydrolase</keyword>
<keyword id="KW-0540">Nuclease</keyword>
<reference key="1">
    <citation type="journal article" date="2008" name="J. Bacteriol.">
        <title>Genome sequence of a nephritogenic and highly transformable M49 strain of Streptococcus pyogenes.</title>
        <authorList>
            <person name="McShan W.M."/>
            <person name="Ferretti J.J."/>
            <person name="Karasawa T."/>
            <person name="Suvorov A.N."/>
            <person name="Lin S."/>
            <person name="Qin B."/>
            <person name="Jia H."/>
            <person name="Kenton S."/>
            <person name="Najar F."/>
            <person name="Wu H."/>
            <person name="Scott J."/>
            <person name="Roe B.A."/>
            <person name="Savic D.J."/>
        </authorList>
    </citation>
    <scope>NUCLEOTIDE SEQUENCE [LARGE SCALE GENOMIC DNA]</scope>
    <source>
        <strain>NZ131</strain>
    </source>
</reference>
<sequence>MADYLTVTHLTKYLKLKFDRDPYLERVYLTGQVSNFRKRPTHQYFSLKDESAVIQATMWAGVYKKLGFDLEEGMKINVIGRVQLYEPSGSYSIVIEKAEPDGIGALALQFEQLKKKLTAEGYFEQKHKQPLPQFVSKIGVITSPSGAVIRDIITTVSRRFPGVEILLFPTKVQGDGAAQEVVANIRRANQREDLDLLIVGRGGGSIEDLWAFNEEIVVQAIFESQLPVISSVGHETDTTLADFVADRRAATPTAAAELATPITKTDLMSWIVERQNRSYQACLRRIKQRQEWVDKLSQSVIFRQPERLYDAYLQKIDRLSMTLMNTMKDRLSSAKENKVQLDHALANSQLQTKIERYQDRVATAKRLLMANMASQYDSQLARFEKAQDALLSLDTSRIIARGYAMIEKNQALVASVSQITKGDQLTIKMRDGQLDVEVKDVKNENI</sequence>
<gene>
    <name evidence="1" type="primary">xseA</name>
    <name type="ordered locus">Spy49_1157c</name>
</gene>
<dbReference type="EC" id="3.1.11.6" evidence="1"/>
<dbReference type="EMBL" id="CP000829">
    <property type="protein sequence ID" value="ACI61445.1"/>
    <property type="molecule type" value="Genomic_DNA"/>
</dbReference>
<dbReference type="SMR" id="B5XM83"/>
<dbReference type="KEGG" id="soz:Spy49_1157c"/>
<dbReference type="HOGENOM" id="CLU_023625_3_1_9"/>
<dbReference type="Proteomes" id="UP000001039">
    <property type="component" value="Chromosome"/>
</dbReference>
<dbReference type="GO" id="GO:0005737">
    <property type="term" value="C:cytoplasm"/>
    <property type="evidence" value="ECO:0007669"/>
    <property type="project" value="UniProtKB-SubCell"/>
</dbReference>
<dbReference type="GO" id="GO:0009318">
    <property type="term" value="C:exodeoxyribonuclease VII complex"/>
    <property type="evidence" value="ECO:0007669"/>
    <property type="project" value="InterPro"/>
</dbReference>
<dbReference type="GO" id="GO:0008855">
    <property type="term" value="F:exodeoxyribonuclease VII activity"/>
    <property type="evidence" value="ECO:0007669"/>
    <property type="project" value="UniProtKB-UniRule"/>
</dbReference>
<dbReference type="GO" id="GO:0003676">
    <property type="term" value="F:nucleic acid binding"/>
    <property type="evidence" value="ECO:0007669"/>
    <property type="project" value="InterPro"/>
</dbReference>
<dbReference type="GO" id="GO:0006308">
    <property type="term" value="P:DNA catabolic process"/>
    <property type="evidence" value="ECO:0007669"/>
    <property type="project" value="UniProtKB-UniRule"/>
</dbReference>
<dbReference type="CDD" id="cd04489">
    <property type="entry name" value="ExoVII_LU_OBF"/>
    <property type="match status" value="1"/>
</dbReference>
<dbReference type="HAMAP" id="MF_00378">
    <property type="entry name" value="Exonuc_7_L"/>
    <property type="match status" value="1"/>
</dbReference>
<dbReference type="InterPro" id="IPR003753">
    <property type="entry name" value="Exonuc_VII_L"/>
</dbReference>
<dbReference type="InterPro" id="IPR020579">
    <property type="entry name" value="Exonuc_VII_lsu_C"/>
</dbReference>
<dbReference type="InterPro" id="IPR025824">
    <property type="entry name" value="OB-fold_nuc-bd_dom"/>
</dbReference>
<dbReference type="NCBIfam" id="TIGR00237">
    <property type="entry name" value="xseA"/>
    <property type="match status" value="1"/>
</dbReference>
<dbReference type="PANTHER" id="PTHR30008">
    <property type="entry name" value="EXODEOXYRIBONUCLEASE 7 LARGE SUBUNIT"/>
    <property type="match status" value="1"/>
</dbReference>
<dbReference type="PANTHER" id="PTHR30008:SF0">
    <property type="entry name" value="EXODEOXYRIBONUCLEASE 7 LARGE SUBUNIT"/>
    <property type="match status" value="1"/>
</dbReference>
<dbReference type="Pfam" id="PF02601">
    <property type="entry name" value="Exonuc_VII_L"/>
    <property type="match status" value="1"/>
</dbReference>
<dbReference type="Pfam" id="PF13742">
    <property type="entry name" value="tRNA_anti_2"/>
    <property type="match status" value="1"/>
</dbReference>
<feature type="chain" id="PRO_1000122096" description="Exodeoxyribonuclease 7 large subunit">
    <location>
        <begin position="1"/>
        <end position="446"/>
    </location>
</feature>
<name>EX7L_STRPZ</name>
<organism>
    <name type="scientific">Streptococcus pyogenes serotype M49 (strain NZ131)</name>
    <dbReference type="NCBI Taxonomy" id="471876"/>
    <lineage>
        <taxon>Bacteria</taxon>
        <taxon>Bacillati</taxon>
        <taxon>Bacillota</taxon>
        <taxon>Bacilli</taxon>
        <taxon>Lactobacillales</taxon>
        <taxon>Streptococcaceae</taxon>
        <taxon>Streptococcus</taxon>
    </lineage>
</organism>
<protein>
    <recommendedName>
        <fullName evidence="1">Exodeoxyribonuclease 7 large subunit</fullName>
        <ecNumber evidence="1">3.1.11.6</ecNumber>
    </recommendedName>
    <alternativeName>
        <fullName evidence="1">Exodeoxyribonuclease VII large subunit</fullName>
        <shortName evidence="1">Exonuclease VII large subunit</shortName>
    </alternativeName>
</protein>